<keyword id="KW-0413">Isomerase</keyword>
<keyword id="KW-1185">Reference proteome</keyword>
<organism>
    <name type="scientific">Pseudomonas aeruginosa (strain ATCC 15692 / DSM 22644 / CIP 104116 / JCM 14847 / LMG 12228 / 1C / PRS 101 / PAO1)</name>
    <dbReference type="NCBI Taxonomy" id="208964"/>
    <lineage>
        <taxon>Bacteria</taxon>
        <taxon>Pseudomonadati</taxon>
        <taxon>Pseudomonadota</taxon>
        <taxon>Gammaproteobacteria</taxon>
        <taxon>Pseudomonadales</taxon>
        <taxon>Pseudomonadaceae</taxon>
        <taxon>Pseudomonas</taxon>
    </lineage>
</organism>
<accession>Q51508</accession>
<protein>
    <recommendedName>
        <fullName>Salicylate biosynthesis isochorismate synthase</fullName>
        <ecNumber>5.4.4.2</ecNumber>
    </recommendedName>
    <alternativeName>
        <fullName>Isochorismate mutase</fullName>
    </alternativeName>
</protein>
<proteinExistence type="evidence at protein level"/>
<gene>
    <name type="primary">pchA</name>
    <name type="ordered locus">PA4231</name>
</gene>
<name>PCHA_PSEAE</name>
<comment type="function">
    <text evidence="2">Involved in the conversion of chorismate to salicylate.</text>
</comment>
<comment type="catalytic activity">
    <reaction>
        <text>chorismate = isochorismate</text>
        <dbReference type="Rhea" id="RHEA:18985"/>
        <dbReference type="ChEBI" id="CHEBI:29748"/>
        <dbReference type="ChEBI" id="CHEBI:29780"/>
        <dbReference type="EC" id="5.4.4.2"/>
    </reaction>
</comment>
<comment type="pathway">
    <text>Siderophore biosynthesis; salicylate biosynthesis.</text>
</comment>
<comment type="similarity">
    <text evidence="3">Belongs to the isochorismate synthase family.</text>
</comment>
<sequence>MSRLAPLSQCLHALRGTFERAIGQAQALDRPVLVAASFEIDPLDPLQVFGAWDDRQTPCLYWEQPELAFFAWGCALELQGHGEQRFARIEENWQLLCADAVVEGPLAPRLCGGFRFDPRGPREEHWQAFADASLMLAGITVLREGERYRVLCQHLAKPGEDALALAAYHCSALLRLRQPARRRPSGPTAGAQGDASAQERRQWEAKVSDAVSSVRQGRFGKVVLARTQARPLGDIEPWQVIEHLRLQHADAQLFACRRGNACFLGASPERLVRIRAGEALTHALAGTIARGGDAQEDARLGQALLDSAKDRHEHQLVVEAIRTALEPFSEVLEIPDAPGLKRLARVQHLNTPIRARLADAGGILRLLQALHPTPAVGGYPRSAALDYIRQHEGMDRGWYAAPLGWLDGEGNGDFLVALRSALLTPGRGYLFAGCGLVGDSEPAHEYRETCLKLSAMREALSAIGGLDEVPLQRGVA</sequence>
<reference key="1">
    <citation type="journal article" date="1995" name="Mol. Gen. Genet.">
        <title>Structural genes for salicylate biosynthesis from chorismate in Pseudomonas aeruginosa.</title>
        <authorList>
            <person name="Serino L."/>
            <person name="Reimmann C."/>
            <person name="Baur H."/>
            <person name="Beyeler M."/>
            <person name="Visca P."/>
            <person name="Haas D."/>
        </authorList>
    </citation>
    <scope>NUCLEOTIDE SEQUENCE [GENOMIC DNA]</scope>
    <scope>FUNCTION</scope>
    <scope>CHARACTERIZATION</scope>
    <source>
        <strain>ATCC 15692 / DSM 22644 / CIP 104116 / JCM 14847 / LMG 12228 / 1C / PRS 101 / PAO1</strain>
    </source>
</reference>
<reference key="2">
    <citation type="journal article" date="2000" name="Nature">
        <title>Complete genome sequence of Pseudomonas aeruginosa PAO1, an opportunistic pathogen.</title>
        <authorList>
            <person name="Stover C.K."/>
            <person name="Pham X.-Q.T."/>
            <person name="Erwin A.L."/>
            <person name="Mizoguchi S.D."/>
            <person name="Warrener P."/>
            <person name="Hickey M.J."/>
            <person name="Brinkman F.S.L."/>
            <person name="Hufnagle W.O."/>
            <person name="Kowalik D.J."/>
            <person name="Lagrou M."/>
            <person name="Garber R.L."/>
            <person name="Goltry L."/>
            <person name="Tolentino E."/>
            <person name="Westbrock-Wadman S."/>
            <person name="Yuan Y."/>
            <person name="Brody L.L."/>
            <person name="Coulter S.N."/>
            <person name="Folger K.R."/>
            <person name="Kas A."/>
            <person name="Larbig K."/>
            <person name="Lim R.M."/>
            <person name="Smith K.A."/>
            <person name="Spencer D.H."/>
            <person name="Wong G.K.-S."/>
            <person name="Wu Z."/>
            <person name="Paulsen I.T."/>
            <person name="Reizer J."/>
            <person name="Saier M.H. Jr."/>
            <person name="Hancock R.E.W."/>
            <person name="Lory S."/>
            <person name="Olson M.V."/>
        </authorList>
    </citation>
    <scope>NUCLEOTIDE SEQUENCE [LARGE SCALE GENOMIC DNA]</scope>
    <source>
        <strain>ATCC 15692 / DSM 22644 / CIP 104116 / JCM 14847 / LMG 12228 / 1C / PRS 101 / PAO1</strain>
    </source>
</reference>
<feature type="chain" id="PRO_0000154151" description="Salicylate biosynthesis isochorismate synthase">
    <location>
        <begin position="1"/>
        <end position="476"/>
    </location>
</feature>
<feature type="region of interest" description="Disordered" evidence="1">
    <location>
        <begin position="181"/>
        <end position="202"/>
    </location>
</feature>
<dbReference type="EC" id="5.4.4.2"/>
<dbReference type="EMBL" id="X82644">
    <property type="protein sequence ID" value="CAA57969.1"/>
    <property type="molecule type" value="Genomic_DNA"/>
</dbReference>
<dbReference type="EMBL" id="AE004091">
    <property type="protein sequence ID" value="AAG07619.1"/>
    <property type="molecule type" value="Genomic_DNA"/>
</dbReference>
<dbReference type="PIR" id="S60203">
    <property type="entry name" value="S58229"/>
</dbReference>
<dbReference type="RefSeq" id="NP_252921.1">
    <property type="nucleotide sequence ID" value="NC_002516.2"/>
</dbReference>
<dbReference type="RefSeq" id="WP_003114686.1">
    <property type="nucleotide sequence ID" value="NZ_QZGE01000028.1"/>
</dbReference>
<dbReference type="SMR" id="Q51508"/>
<dbReference type="FunCoup" id="Q51508">
    <property type="interactions" value="110"/>
</dbReference>
<dbReference type="STRING" id="208964.PA4231"/>
<dbReference type="PaxDb" id="208964-PA4231"/>
<dbReference type="GeneID" id="881821"/>
<dbReference type="KEGG" id="pae:PA4231"/>
<dbReference type="PATRIC" id="fig|208964.12.peg.4432"/>
<dbReference type="PseudoCAP" id="PA4231"/>
<dbReference type="HOGENOM" id="CLU_006493_8_4_6"/>
<dbReference type="InParanoid" id="Q51508"/>
<dbReference type="OrthoDB" id="9806579at2"/>
<dbReference type="PhylomeDB" id="Q51508"/>
<dbReference type="BioCyc" id="MetaCyc:MONOMER-15306"/>
<dbReference type="BioCyc" id="PAER208964:G1FZ6-4304-MONOMER"/>
<dbReference type="BRENDA" id="5.4.4.2">
    <property type="organism ID" value="5087"/>
</dbReference>
<dbReference type="UniPathway" id="UPA00025"/>
<dbReference type="PHI-base" id="PHI:5057"/>
<dbReference type="PHI-base" id="PHI:6988"/>
<dbReference type="Proteomes" id="UP000002438">
    <property type="component" value="Chromosome"/>
</dbReference>
<dbReference type="GO" id="GO:0008909">
    <property type="term" value="F:isochorismate synthase activity"/>
    <property type="evidence" value="ECO:0000314"/>
    <property type="project" value="PseudoCAP"/>
</dbReference>
<dbReference type="GO" id="GO:0042864">
    <property type="term" value="P:pyochelin biosynthetic process"/>
    <property type="evidence" value="ECO:0000314"/>
    <property type="project" value="CACAO"/>
</dbReference>
<dbReference type="GO" id="GO:0009697">
    <property type="term" value="P:salicylic acid biosynthetic process"/>
    <property type="evidence" value="ECO:0000314"/>
    <property type="project" value="PseudoCAP"/>
</dbReference>
<dbReference type="Gene3D" id="3.60.120.10">
    <property type="entry name" value="Anthranilate synthase"/>
    <property type="match status" value="1"/>
</dbReference>
<dbReference type="InterPro" id="IPR005801">
    <property type="entry name" value="ADC_synthase"/>
</dbReference>
<dbReference type="InterPro" id="IPR015890">
    <property type="entry name" value="Chorismate_C"/>
</dbReference>
<dbReference type="InterPro" id="IPR004561">
    <property type="entry name" value="IsoChor_synthase"/>
</dbReference>
<dbReference type="NCBIfam" id="TIGR00543">
    <property type="entry name" value="isochor_syn"/>
    <property type="match status" value="1"/>
</dbReference>
<dbReference type="NCBIfam" id="NF005459">
    <property type="entry name" value="PRK07054.1"/>
    <property type="match status" value="1"/>
</dbReference>
<dbReference type="PANTHER" id="PTHR42839">
    <property type="entry name" value="ISOCHORISMATE SYNTHASE ENTC"/>
    <property type="match status" value="1"/>
</dbReference>
<dbReference type="PANTHER" id="PTHR42839:SF2">
    <property type="entry name" value="ISOCHORISMATE SYNTHASE ENTC"/>
    <property type="match status" value="1"/>
</dbReference>
<dbReference type="Pfam" id="PF00425">
    <property type="entry name" value="Chorismate_bind"/>
    <property type="match status" value="1"/>
</dbReference>
<dbReference type="SUPFAM" id="SSF56322">
    <property type="entry name" value="ADC synthase"/>
    <property type="match status" value="1"/>
</dbReference>
<evidence type="ECO:0000256" key="1">
    <source>
        <dbReference type="SAM" id="MobiDB-lite"/>
    </source>
</evidence>
<evidence type="ECO:0000269" key="2">
    <source>
    </source>
</evidence>
<evidence type="ECO:0000305" key="3"/>